<evidence type="ECO:0000255" key="1">
    <source>
        <dbReference type="HAMAP-Rule" id="MF_00168"/>
    </source>
</evidence>
<gene>
    <name evidence="1" type="primary">tgt</name>
    <name type="ordered locus">BCG9842_B0699</name>
</gene>
<proteinExistence type="inferred from homology"/>
<name>TGT_BACC2</name>
<protein>
    <recommendedName>
        <fullName evidence="1">Queuine tRNA-ribosyltransferase</fullName>
        <ecNumber evidence="1">2.4.2.29</ecNumber>
    </recommendedName>
    <alternativeName>
        <fullName evidence="1">Guanine insertion enzyme</fullName>
    </alternativeName>
    <alternativeName>
        <fullName evidence="1">tRNA-guanine transglycosylase</fullName>
    </alternativeName>
</protein>
<accession>B7IIS9</accession>
<reference key="1">
    <citation type="submission" date="2008-10" db="EMBL/GenBank/DDBJ databases">
        <title>Genome sequence of Bacillus cereus G9842.</title>
        <authorList>
            <person name="Dodson R.J."/>
            <person name="Durkin A.S."/>
            <person name="Rosovitz M.J."/>
            <person name="Rasko D.A."/>
            <person name="Hoffmaster A."/>
            <person name="Ravel J."/>
            <person name="Sutton G."/>
        </authorList>
    </citation>
    <scope>NUCLEOTIDE SEQUENCE [LARGE SCALE GENOMIC DNA]</scope>
    <source>
        <strain>G9842</strain>
    </source>
</reference>
<dbReference type="EC" id="2.4.2.29" evidence="1"/>
<dbReference type="EMBL" id="CP001186">
    <property type="protein sequence ID" value="ACK93063.1"/>
    <property type="molecule type" value="Genomic_DNA"/>
</dbReference>
<dbReference type="RefSeq" id="WP_000125365.1">
    <property type="nucleotide sequence ID" value="NC_011772.1"/>
</dbReference>
<dbReference type="SMR" id="B7IIS9"/>
<dbReference type="GeneID" id="72451095"/>
<dbReference type="KEGG" id="bcg:BCG9842_B0699"/>
<dbReference type="HOGENOM" id="CLU_022060_0_1_9"/>
<dbReference type="UniPathway" id="UPA00392"/>
<dbReference type="Proteomes" id="UP000006744">
    <property type="component" value="Chromosome"/>
</dbReference>
<dbReference type="GO" id="GO:0005829">
    <property type="term" value="C:cytosol"/>
    <property type="evidence" value="ECO:0007669"/>
    <property type="project" value="TreeGrafter"/>
</dbReference>
<dbReference type="GO" id="GO:0046872">
    <property type="term" value="F:metal ion binding"/>
    <property type="evidence" value="ECO:0007669"/>
    <property type="project" value="UniProtKB-KW"/>
</dbReference>
<dbReference type="GO" id="GO:0008479">
    <property type="term" value="F:tRNA-guanosine(34) queuine transglycosylase activity"/>
    <property type="evidence" value="ECO:0007669"/>
    <property type="project" value="UniProtKB-UniRule"/>
</dbReference>
<dbReference type="GO" id="GO:0008616">
    <property type="term" value="P:queuosine biosynthetic process"/>
    <property type="evidence" value="ECO:0007669"/>
    <property type="project" value="UniProtKB-UniRule"/>
</dbReference>
<dbReference type="GO" id="GO:0002099">
    <property type="term" value="P:tRNA wobble guanine modification"/>
    <property type="evidence" value="ECO:0007669"/>
    <property type="project" value="TreeGrafter"/>
</dbReference>
<dbReference type="GO" id="GO:0101030">
    <property type="term" value="P:tRNA-guanine transglycosylation"/>
    <property type="evidence" value="ECO:0007669"/>
    <property type="project" value="InterPro"/>
</dbReference>
<dbReference type="FunFam" id="3.20.20.105:FF:000001">
    <property type="entry name" value="Queuine tRNA-ribosyltransferase"/>
    <property type="match status" value="1"/>
</dbReference>
<dbReference type="Gene3D" id="3.20.20.105">
    <property type="entry name" value="Queuine tRNA-ribosyltransferase-like"/>
    <property type="match status" value="1"/>
</dbReference>
<dbReference type="HAMAP" id="MF_00168">
    <property type="entry name" value="Q_tRNA_Tgt"/>
    <property type="match status" value="1"/>
</dbReference>
<dbReference type="InterPro" id="IPR050076">
    <property type="entry name" value="ArchSynthase1/Queuine_TRR"/>
</dbReference>
<dbReference type="InterPro" id="IPR004803">
    <property type="entry name" value="TGT"/>
</dbReference>
<dbReference type="InterPro" id="IPR036511">
    <property type="entry name" value="TGT-like_sf"/>
</dbReference>
<dbReference type="InterPro" id="IPR002616">
    <property type="entry name" value="tRNA_ribo_trans-like"/>
</dbReference>
<dbReference type="NCBIfam" id="TIGR00430">
    <property type="entry name" value="Q_tRNA_tgt"/>
    <property type="match status" value="1"/>
</dbReference>
<dbReference type="NCBIfam" id="TIGR00449">
    <property type="entry name" value="tgt_general"/>
    <property type="match status" value="1"/>
</dbReference>
<dbReference type="PANTHER" id="PTHR46499">
    <property type="entry name" value="QUEUINE TRNA-RIBOSYLTRANSFERASE"/>
    <property type="match status" value="1"/>
</dbReference>
<dbReference type="PANTHER" id="PTHR46499:SF1">
    <property type="entry name" value="QUEUINE TRNA-RIBOSYLTRANSFERASE"/>
    <property type="match status" value="1"/>
</dbReference>
<dbReference type="Pfam" id="PF01702">
    <property type="entry name" value="TGT"/>
    <property type="match status" value="1"/>
</dbReference>
<dbReference type="SUPFAM" id="SSF51713">
    <property type="entry name" value="tRNA-guanine transglycosylase"/>
    <property type="match status" value="1"/>
</dbReference>
<organism>
    <name type="scientific">Bacillus cereus (strain G9842)</name>
    <dbReference type="NCBI Taxonomy" id="405531"/>
    <lineage>
        <taxon>Bacteria</taxon>
        <taxon>Bacillati</taxon>
        <taxon>Bacillota</taxon>
        <taxon>Bacilli</taxon>
        <taxon>Bacillales</taxon>
        <taxon>Bacillaceae</taxon>
        <taxon>Bacillus</taxon>
        <taxon>Bacillus cereus group</taxon>
    </lineage>
</organism>
<comment type="function">
    <text evidence="1">Catalyzes the base-exchange of a guanine (G) residue with the queuine precursor 7-aminomethyl-7-deazaguanine (PreQ1) at position 34 (anticodon wobble position) in tRNAs with GU(N) anticodons (tRNA-Asp, -Asn, -His and -Tyr). Catalysis occurs through a double-displacement mechanism. The nucleophile active site attacks the C1' of nucleotide 34 to detach the guanine base from the RNA, forming a covalent enzyme-RNA intermediate. The proton acceptor active site deprotonates the incoming PreQ1, allowing a nucleophilic attack on the C1' of the ribose to form the product. After dissociation, two additional enzymatic reactions on the tRNA convert PreQ1 to queuine (Q), resulting in the hypermodified nucleoside queuosine (7-(((4,5-cis-dihydroxy-2-cyclopenten-1-yl)amino)methyl)-7-deazaguanosine).</text>
</comment>
<comment type="catalytic activity">
    <reaction evidence="1">
        <text>7-aminomethyl-7-carbaguanine + guanosine(34) in tRNA = 7-aminomethyl-7-carbaguanosine(34) in tRNA + guanine</text>
        <dbReference type="Rhea" id="RHEA:24104"/>
        <dbReference type="Rhea" id="RHEA-COMP:10341"/>
        <dbReference type="Rhea" id="RHEA-COMP:10342"/>
        <dbReference type="ChEBI" id="CHEBI:16235"/>
        <dbReference type="ChEBI" id="CHEBI:58703"/>
        <dbReference type="ChEBI" id="CHEBI:74269"/>
        <dbReference type="ChEBI" id="CHEBI:82833"/>
        <dbReference type="EC" id="2.4.2.29"/>
    </reaction>
</comment>
<comment type="cofactor">
    <cofactor evidence="1">
        <name>Zn(2+)</name>
        <dbReference type="ChEBI" id="CHEBI:29105"/>
    </cofactor>
    <text evidence="1">Binds 1 zinc ion per subunit.</text>
</comment>
<comment type="pathway">
    <text evidence="1">tRNA modification; tRNA-queuosine biosynthesis.</text>
</comment>
<comment type="subunit">
    <text evidence="1">Homodimer. Within each dimer, one monomer is responsible for RNA recognition and catalysis, while the other monomer binds to the replacement base PreQ1.</text>
</comment>
<comment type="similarity">
    <text evidence="1">Belongs to the queuine tRNA-ribosyltransferase family.</text>
</comment>
<feature type="chain" id="PRO_1000197983" description="Queuine tRNA-ribosyltransferase">
    <location>
        <begin position="1"/>
        <end position="379"/>
    </location>
</feature>
<feature type="region of interest" description="RNA binding" evidence="1">
    <location>
        <begin position="249"/>
        <end position="255"/>
    </location>
</feature>
<feature type="region of interest" description="RNA binding; important for wobble base 34 recognition" evidence="1">
    <location>
        <begin position="273"/>
        <end position="277"/>
    </location>
</feature>
<feature type="active site" description="Proton acceptor" evidence="1">
    <location>
        <position position="94"/>
    </location>
</feature>
<feature type="active site" description="Nucleophile" evidence="1">
    <location>
        <position position="268"/>
    </location>
</feature>
<feature type="binding site" evidence="1">
    <location>
        <begin position="94"/>
        <end position="98"/>
    </location>
    <ligand>
        <name>substrate</name>
    </ligand>
</feature>
<feature type="binding site" evidence="1">
    <location>
        <position position="148"/>
    </location>
    <ligand>
        <name>substrate</name>
    </ligand>
</feature>
<feature type="binding site" evidence="1">
    <location>
        <position position="191"/>
    </location>
    <ligand>
        <name>substrate</name>
    </ligand>
</feature>
<feature type="binding site" evidence="1">
    <location>
        <position position="218"/>
    </location>
    <ligand>
        <name>substrate</name>
    </ligand>
</feature>
<feature type="binding site" evidence="1">
    <location>
        <position position="306"/>
    </location>
    <ligand>
        <name>Zn(2+)</name>
        <dbReference type="ChEBI" id="CHEBI:29105"/>
    </ligand>
</feature>
<feature type="binding site" evidence="1">
    <location>
        <position position="308"/>
    </location>
    <ligand>
        <name>Zn(2+)</name>
        <dbReference type="ChEBI" id="CHEBI:29105"/>
    </ligand>
</feature>
<feature type="binding site" evidence="1">
    <location>
        <position position="311"/>
    </location>
    <ligand>
        <name>Zn(2+)</name>
        <dbReference type="ChEBI" id="CHEBI:29105"/>
    </ligand>
</feature>
<feature type="binding site" evidence="1">
    <location>
        <position position="337"/>
    </location>
    <ligand>
        <name>Zn(2+)</name>
        <dbReference type="ChEBI" id="CHEBI:29105"/>
    </ligand>
</feature>
<keyword id="KW-0328">Glycosyltransferase</keyword>
<keyword id="KW-0479">Metal-binding</keyword>
<keyword id="KW-0671">Queuosine biosynthesis</keyword>
<keyword id="KW-0808">Transferase</keyword>
<keyword id="KW-0819">tRNA processing</keyword>
<keyword id="KW-0862">Zinc</keyword>
<sequence length="379" mass="43243">MTAIRYEFIKTCKQTGARLGRVHTPHGSFDTPTFMPVGTLATVKTMSPEELKAMDSGIILSNTYHLWLRPGHEIIREAGGLHKFMNWDRAILTDSGGFQVFSLSDFRRIEEEGVHFRNHLNGDKLFLSPEKAMEIQNALGSDIMMAFDECPPFPATFEYMKKSVERTSRWAERCLKAHERPQDQGLFGIVQGGEYEELRRQSAKDLVSMDFPGYAVGGLSVGEPKDIMNRVLEFTTPLLPDNKPRYLMGVGSPDSLIDGAIRGIDMFDCVLPTRIARNGTCMTSEGRLVVKNAKFARDFGPLDPNCDCYTCKNYSRAYIRHLMKCDETFGIRLTSYHNLHFLLNLMEQVRQAIREDRLGDFREEFFEQYGFNKPNAKNF</sequence>